<dbReference type="EMBL" id="CU928145">
    <property type="protein sequence ID" value="CAU99774.1"/>
    <property type="molecule type" value="Genomic_DNA"/>
</dbReference>
<dbReference type="RefSeq" id="WP_000449030.1">
    <property type="nucleotide sequence ID" value="NC_011748.1"/>
</dbReference>
<dbReference type="SMR" id="B7LH88"/>
<dbReference type="KEGG" id="eck:EC55989_3574"/>
<dbReference type="HOGENOM" id="CLU_105087_3_0_6"/>
<dbReference type="Proteomes" id="UP000000746">
    <property type="component" value="Chromosome"/>
</dbReference>
<dbReference type="FunFam" id="2.30.110.10:FF:000003">
    <property type="entry name" value="UPF0306 protein YhbP"/>
    <property type="match status" value="1"/>
</dbReference>
<dbReference type="Gene3D" id="2.30.110.10">
    <property type="entry name" value="Electron Transport, Fmn-binding Protein, Chain A"/>
    <property type="match status" value="1"/>
</dbReference>
<dbReference type="HAMAP" id="MF_00764">
    <property type="entry name" value="UPF0306"/>
    <property type="match status" value="1"/>
</dbReference>
<dbReference type="InterPro" id="IPR012349">
    <property type="entry name" value="Split_barrel_FMN-bd"/>
</dbReference>
<dbReference type="InterPro" id="IPR011194">
    <property type="entry name" value="UPF0306"/>
</dbReference>
<dbReference type="NCBIfam" id="NF002900">
    <property type="entry name" value="PRK03467.1"/>
    <property type="match status" value="1"/>
</dbReference>
<dbReference type="PIRSF" id="PIRSF009554">
    <property type="entry name" value="UCP009554"/>
    <property type="match status" value="1"/>
</dbReference>
<dbReference type="SUPFAM" id="SSF50475">
    <property type="entry name" value="FMN-binding split barrel"/>
    <property type="match status" value="1"/>
</dbReference>
<keyword id="KW-1185">Reference proteome</keyword>
<reference key="1">
    <citation type="journal article" date="2009" name="PLoS Genet.">
        <title>Organised genome dynamics in the Escherichia coli species results in highly diverse adaptive paths.</title>
        <authorList>
            <person name="Touchon M."/>
            <person name="Hoede C."/>
            <person name="Tenaillon O."/>
            <person name="Barbe V."/>
            <person name="Baeriswyl S."/>
            <person name="Bidet P."/>
            <person name="Bingen E."/>
            <person name="Bonacorsi S."/>
            <person name="Bouchier C."/>
            <person name="Bouvet O."/>
            <person name="Calteau A."/>
            <person name="Chiapello H."/>
            <person name="Clermont O."/>
            <person name="Cruveiller S."/>
            <person name="Danchin A."/>
            <person name="Diard M."/>
            <person name="Dossat C."/>
            <person name="Karoui M.E."/>
            <person name="Frapy E."/>
            <person name="Garry L."/>
            <person name="Ghigo J.M."/>
            <person name="Gilles A.M."/>
            <person name="Johnson J."/>
            <person name="Le Bouguenec C."/>
            <person name="Lescat M."/>
            <person name="Mangenot S."/>
            <person name="Martinez-Jehanne V."/>
            <person name="Matic I."/>
            <person name="Nassif X."/>
            <person name="Oztas S."/>
            <person name="Petit M.A."/>
            <person name="Pichon C."/>
            <person name="Rouy Z."/>
            <person name="Ruf C.S."/>
            <person name="Schneider D."/>
            <person name="Tourret J."/>
            <person name="Vacherie B."/>
            <person name="Vallenet D."/>
            <person name="Medigue C."/>
            <person name="Rocha E.P.C."/>
            <person name="Denamur E."/>
        </authorList>
    </citation>
    <scope>NUCLEOTIDE SEQUENCE [LARGE SCALE GENOMIC DNA]</scope>
    <source>
        <strain>55989 / EAEC</strain>
    </source>
</reference>
<accession>B7LH88</accession>
<protein>
    <recommendedName>
        <fullName evidence="1">UPF0306 protein YhbP</fullName>
    </recommendedName>
</protein>
<feature type="chain" id="PRO_1000148422" description="UPF0306 protein YhbP">
    <location>
        <begin position="1"/>
        <end position="147"/>
    </location>
</feature>
<gene>
    <name evidence="1" type="primary">yhbP</name>
    <name type="ordered locus">EC55989_3574</name>
</gene>
<proteinExistence type="inferred from homology"/>
<evidence type="ECO:0000255" key="1">
    <source>
        <dbReference type="HAMAP-Rule" id="MF_00764"/>
    </source>
</evidence>
<sequence>METLIAISRWLAKQHVVTWCVQQEGELWCANAFYLFDAQKVAFYILTEEKTRHAQMSGPQAAVAGTVNGQPKTVALIRGVQFKGEIRRLEGEESDLARKAYNRRFPVARMLSAPVWEIRLDEIKFTDNTLGFGKKMIWLRDSGTEQA</sequence>
<organism>
    <name type="scientific">Escherichia coli (strain 55989 / EAEC)</name>
    <dbReference type="NCBI Taxonomy" id="585055"/>
    <lineage>
        <taxon>Bacteria</taxon>
        <taxon>Pseudomonadati</taxon>
        <taxon>Pseudomonadota</taxon>
        <taxon>Gammaproteobacteria</taxon>
        <taxon>Enterobacterales</taxon>
        <taxon>Enterobacteriaceae</taxon>
        <taxon>Escherichia</taxon>
    </lineage>
</organism>
<name>YHBP_ECO55</name>
<comment type="similarity">
    <text evidence="1">Belongs to the UPF0306 family.</text>
</comment>